<accession>Q7SY53</accession>
<proteinExistence type="evidence at transcript level"/>
<sequence>MSGCPFLGGTLQLLSSNPRQAEEEDGSQGGVNKAAKGGIIYGDYLQLDKVLNAQVLQSEQKGNKIHDEHLFIVTHQAYELWFKQILWELDSVRDLFIKKHVRDERNMLKVVSRIHRITMIFKLLVDQFAVLETMTALDFFDFREYLSPASGFQSLQFRLLEQKIGVADHLRVPYNRRHYRDNFHGEESETLLSSEQEPTLLQLVEQWLERTPGLEKDGFNFWGKLQANIEEGLKREKHQVEKMEDTEVKQELLEDLNKQMETFTALFDSKRHEHLLSKGERRLSYKALQGALMINFYREEPRFQVPFQLLTALMEIDTLMTKWRYNHVCMVHRMIGSKAGTGGSSGYHYLRSTVSDRYKVFVDLFNLATFLVPRSWVPKLNPNIHKFPYTAECYDSSYNSCSSEDSD</sequence>
<evidence type="ECO:0000255" key="1">
    <source>
        <dbReference type="HAMAP-Rule" id="MF_03020"/>
    </source>
</evidence>
<comment type="function">
    <text evidence="1">Heme-dependent dioxygenase that catalyzes the oxidative cleavage of the L-tryptophan (L-Trp) pyrrole ring and converts L-tryptophan to N-formyl-L-kynurenine. Catalyzes the oxidative cleavage of the indole moiety.</text>
</comment>
<comment type="catalytic activity">
    <reaction evidence="1">
        <text>L-tryptophan + O2 = N-formyl-L-kynurenine</text>
        <dbReference type="Rhea" id="RHEA:24536"/>
        <dbReference type="ChEBI" id="CHEBI:15379"/>
        <dbReference type="ChEBI" id="CHEBI:57912"/>
        <dbReference type="ChEBI" id="CHEBI:58629"/>
        <dbReference type="EC" id="1.13.11.11"/>
    </reaction>
</comment>
<comment type="cofactor">
    <cofactor evidence="1">
        <name>heme</name>
        <dbReference type="ChEBI" id="CHEBI:30413"/>
    </cofactor>
    <text evidence="1">Binds 1 heme group per subunit.</text>
</comment>
<comment type="pathway">
    <text evidence="1">Amino-acid degradation; L-tryptophan degradation via kynurenine pathway; L-kynurenine from L-tryptophan: step 1/2.</text>
</comment>
<comment type="subunit">
    <text evidence="1">Homotetramer. Dimer of dimers.</text>
</comment>
<comment type="similarity">
    <text evidence="1">Belongs to the tryptophan 2,3-dioxygenase family.</text>
</comment>
<name>T23OB_DANRE</name>
<reference key="1">
    <citation type="submission" date="2003-07" db="EMBL/GenBank/DDBJ databases">
        <authorList>
            <consortium name="NIH - Zebrafish Gene Collection (ZGC) project"/>
        </authorList>
    </citation>
    <scope>NUCLEOTIDE SEQUENCE [LARGE SCALE MRNA]</scope>
    <source>
        <strain>AB</strain>
    </source>
</reference>
<keyword id="KW-0223">Dioxygenase</keyword>
<keyword id="KW-0349">Heme</keyword>
<keyword id="KW-0408">Iron</keyword>
<keyword id="KW-0479">Metal-binding</keyword>
<keyword id="KW-0560">Oxidoreductase</keyword>
<keyword id="KW-1185">Reference proteome</keyword>
<keyword id="KW-0823">Tryptophan catabolism</keyword>
<protein>
    <recommendedName>
        <fullName evidence="1">Tryptophan 2,3-dioxygenase B</fullName>
        <shortName evidence="1">TDO-B</shortName>
        <ecNumber evidence="1">1.13.11.11</ecNumber>
    </recommendedName>
    <alternativeName>
        <fullName evidence="1">Tryptamin 2,3-dioxygenase B</fullName>
    </alternativeName>
    <alternativeName>
        <fullName evidence="1">Tryptophan oxygenase B</fullName>
        <shortName evidence="1">TO-B</shortName>
        <shortName evidence="1">TRPO-B</shortName>
    </alternativeName>
    <alternativeName>
        <fullName evidence="1">Tryptophan pyrrolase B</fullName>
    </alternativeName>
    <alternativeName>
        <fullName evidence="1">Tryptophanase B</fullName>
    </alternativeName>
</protein>
<feature type="chain" id="PRO_0000247475" description="Tryptophan 2,3-dioxygenase B">
    <location>
        <begin position="1"/>
        <end position="407"/>
    </location>
</feature>
<feature type="binding site" evidence="1">
    <location>
        <begin position="71"/>
        <end position="75"/>
    </location>
    <ligand>
        <name>substrate</name>
    </ligand>
</feature>
<feature type="binding site" evidence="1">
    <location>
        <position position="143"/>
    </location>
    <ligand>
        <name>substrate</name>
    </ligand>
</feature>
<feature type="binding site" description="axial binding residue" evidence="1">
    <location>
        <position position="327"/>
    </location>
    <ligand>
        <name>heme</name>
        <dbReference type="ChEBI" id="CHEBI:30413"/>
    </ligand>
    <ligandPart>
        <name>Fe</name>
        <dbReference type="ChEBI" id="CHEBI:18248"/>
    </ligandPart>
</feature>
<feature type="binding site" evidence="1">
    <location>
        <position position="341"/>
    </location>
    <ligand>
        <name>substrate</name>
    </ligand>
</feature>
<gene>
    <name evidence="1" type="primary">tdo2b</name>
    <name type="synonym">tdo2</name>
    <name type="synonym">tdo2l</name>
    <name type="ORF">zgc:63488</name>
</gene>
<dbReference type="EC" id="1.13.11.11" evidence="1"/>
<dbReference type="EMBL" id="BC055123">
    <property type="protein sequence ID" value="AAH55123.1"/>
    <property type="molecule type" value="mRNA"/>
</dbReference>
<dbReference type="RefSeq" id="NP_956150.1">
    <property type="nucleotide sequence ID" value="NM_199856.1"/>
</dbReference>
<dbReference type="SMR" id="Q7SY53"/>
<dbReference type="FunCoup" id="Q7SY53">
    <property type="interactions" value="240"/>
</dbReference>
<dbReference type="STRING" id="7955.ENSDARP00000035102"/>
<dbReference type="PaxDb" id="7955-ENSDARP00000035102"/>
<dbReference type="GeneID" id="334082"/>
<dbReference type="KEGG" id="dre:334082"/>
<dbReference type="AGR" id="ZFIN:ZDB-GENE-030131-6014"/>
<dbReference type="CTD" id="334082"/>
<dbReference type="ZFIN" id="ZDB-GENE-030131-6014">
    <property type="gene designation" value="tdo2b"/>
</dbReference>
<dbReference type="eggNOG" id="KOG3906">
    <property type="taxonomic scope" value="Eukaryota"/>
</dbReference>
<dbReference type="InParanoid" id="Q7SY53"/>
<dbReference type="OrthoDB" id="447477at2759"/>
<dbReference type="PhylomeDB" id="Q7SY53"/>
<dbReference type="UniPathway" id="UPA00333">
    <property type="reaction ID" value="UER00453"/>
</dbReference>
<dbReference type="PRO" id="PR:Q7SY53"/>
<dbReference type="Proteomes" id="UP000000437">
    <property type="component" value="Chromosome 11"/>
</dbReference>
<dbReference type="GO" id="GO:0020037">
    <property type="term" value="F:heme binding"/>
    <property type="evidence" value="ECO:0000250"/>
    <property type="project" value="UniProtKB"/>
</dbReference>
<dbReference type="GO" id="GO:0046872">
    <property type="term" value="F:metal ion binding"/>
    <property type="evidence" value="ECO:0007669"/>
    <property type="project" value="UniProtKB-KW"/>
</dbReference>
<dbReference type="GO" id="GO:0004833">
    <property type="term" value="F:tryptophan 2,3-dioxygenase activity"/>
    <property type="evidence" value="ECO:0000250"/>
    <property type="project" value="UniProtKB"/>
</dbReference>
<dbReference type="GO" id="GO:0019442">
    <property type="term" value="P:L-tryptophan catabolic process to acetyl-CoA"/>
    <property type="evidence" value="ECO:0000318"/>
    <property type="project" value="GO_Central"/>
</dbReference>
<dbReference type="GO" id="GO:0019441">
    <property type="term" value="P:L-tryptophan catabolic process to kynurenine"/>
    <property type="evidence" value="ECO:0000250"/>
    <property type="project" value="UniProtKB"/>
</dbReference>
<dbReference type="GO" id="GO:0051289">
    <property type="term" value="P:protein homotetramerization"/>
    <property type="evidence" value="ECO:0000250"/>
    <property type="project" value="UniProtKB"/>
</dbReference>
<dbReference type="FunFam" id="1.10.287.3810:FF:000001">
    <property type="entry name" value="Tryptophan 2,3-dioxygenase"/>
    <property type="match status" value="1"/>
</dbReference>
<dbReference type="Gene3D" id="1.10.287.3810">
    <property type="match status" value="1"/>
</dbReference>
<dbReference type="Gene3D" id="1.20.58.480">
    <property type="match status" value="1"/>
</dbReference>
<dbReference type="HAMAP" id="MF_01972">
    <property type="entry name" value="T23O"/>
    <property type="match status" value="1"/>
</dbReference>
<dbReference type="InterPro" id="IPR037217">
    <property type="entry name" value="Trp/Indoleamine_2_3_dOase-like"/>
</dbReference>
<dbReference type="InterPro" id="IPR004981">
    <property type="entry name" value="Trp_2_3_dOase"/>
</dbReference>
<dbReference type="PANTHER" id="PTHR10138">
    <property type="entry name" value="TRYPTOPHAN 2,3-DIOXYGENASE"/>
    <property type="match status" value="1"/>
</dbReference>
<dbReference type="PANTHER" id="PTHR10138:SF0">
    <property type="entry name" value="TRYPTOPHAN 2,3-DIOXYGENASE"/>
    <property type="match status" value="1"/>
</dbReference>
<dbReference type="Pfam" id="PF03301">
    <property type="entry name" value="Trp_dioxygenase"/>
    <property type="match status" value="1"/>
</dbReference>
<dbReference type="SUPFAM" id="SSF140959">
    <property type="entry name" value="Indolic compounds 2,3-dioxygenase-like"/>
    <property type="match status" value="1"/>
</dbReference>
<organism>
    <name type="scientific">Danio rerio</name>
    <name type="common">Zebrafish</name>
    <name type="synonym">Brachydanio rerio</name>
    <dbReference type="NCBI Taxonomy" id="7955"/>
    <lineage>
        <taxon>Eukaryota</taxon>
        <taxon>Metazoa</taxon>
        <taxon>Chordata</taxon>
        <taxon>Craniata</taxon>
        <taxon>Vertebrata</taxon>
        <taxon>Euteleostomi</taxon>
        <taxon>Actinopterygii</taxon>
        <taxon>Neopterygii</taxon>
        <taxon>Teleostei</taxon>
        <taxon>Ostariophysi</taxon>
        <taxon>Cypriniformes</taxon>
        <taxon>Danionidae</taxon>
        <taxon>Danioninae</taxon>
        <taxon>Danio</taxon>
    </lineage>
</organism>